<keyword id="KW-0040">ANK repeat</keyword>
<keyword id="KW-0067">ATP-binding</keyword>
<keyword id="KW-0418">Kinase</keyword>
<keyword id="KW-0547">Nucleotide-binding</keyword>
<keyword id="KW-1185">Reference proteome</keyword>
<keyword id="KW-0677">Repeat</keyword>
<keyword id="KW-0723">Serine/threonine-protein kinase</keyword>
<keyword id="KW-0808">Transferase</keyword>
<name>Y7566_DICDI</name>
<organism>
    <name type="scientific">Dictyostelium discoideum</name>
    <name type="common">Social amoeba</name>
    <dbReference type="NCBI Taxonomy" id="44689"/>
    <lineage>
        <taxon>Eukaryota</taxon>
        <taxon>Amoebozoa</taxon>
        <taxon>Evosea</taxon>
        <taxon>Eumycetozoa</taxon>
        <taxon>Dictyostelia</taxon>
        <taxon>Dictyosteliales</taxon>
        <taxon>Dictyosteliaceae</taxon>
        <taxon>Dictyostelium</taxon>
    </lineage>
</organism>
<reference key="1">
    <citation type="journal article" date="2005" name="Nature">
        <title>The genome of the social amoeba Dictyostelium discoideum.</title>
        <authorList>
            <person name="Eichinger L."/>
            <person name="Pachebat J.A."/>
            <person name="Gloeckner G."/>
            <person name="Rajandream M.A."/>
            <person name="Sucgang R."/>
            <person name="Berriman M."/>
            <person name="Song J."/>
            <person name="Olsen R."/>
            <person name="Szafranski K."/>
            <person name="Xu Q."/>
            <person name="Tunggal B."/>
            <person name="Kummerfeld S."/>
            <person name="Madera M."/>
            <person name="Konfortov B.A."/>
            <person name="Rivero F."/>
            <person name="Bankier A.T."/>
            <person name="Lehmann R."/>
            <person name="Hamlin N."/>
            <person name="Davies R."/>
            <person name="Gaudet P."/>
            <person name="Fey P."/>
            <person name="Pilcher K."/>
            <person name="Chen G."/>
            <person name="Saunders D."/>
            <person name="Sodergren E.J."/>
            <person name="Davis P."/>
            <person name="Kerhornou A."/>
            <person name="Nie X."/>
            <person name="Hall N."/>
            <person name="Anjard C."/>
            <person name="Hemphill L."/>
            <person name="Bason N."/>
            <person name="Farbrother P."/>
            <person name="Desany B."/>
            <person name="Just E."/>
            <person name="Morio T."/>
            <person name="Rost R."/>
            <person name="Churcher C.M."/>
            <person name="Cooper J."/>
            <person name="Haydock S."/>
            <person name="van Driessche N."/>
            <person name="Cronin A."/>
            <person name="Goodhead I."/>
            <person name="Muzny D.M."/>
            <person name="Mourier T."/>
            <person name="Pain A."/>
            <person name="Lu M."/>
            <person name="Harper D."/>
            <person name="Lindsay R."/>
            <person name="Hauser H."/>
            <person name="James K.D."/>
            <person name="Quiles M."/>
            <person name="Madan Babu M."/>
            <person name="Saito T."/>
            <person name="Buchrieser C."/>
            <person name="Wardroper A."/>
            <person name="Felder M."/>
            <person name="Thangavelu M."/>
            <person name="Johnson D."/>
            <person name="Knights A."/>
            <person name="Loulseged H."/>
            <person name="Mungall K.L."/>
            <person name="Oliver K."/>
            <person name="Price C."/>
            <person name="Quail M.A."/>
            <person name="Urushihara H."/>
            <person name="Hernandez J."/>
            <person name="Rabbinowitsch E."/>
            <person name="Steffen D."/>
            <person name="Sanders M."/>
            <person name="Ma J."/>
            <person name="Kohara Y."/>
            <person name="Sharp S."/>
            <person name="Simmonds M.N."/>
            <person name="Spiegler S."/>
            <person name="Tivey A."/>
            <person name="Sugano S."/>
            <person name="White B."/>
            <person name="Walker D."/>
            <person name="Woodward J.R."/>
            <person name="Winckler T."/>
            <person name="Tanaka Y."/>
            <person name="Shaulsky G."/>
            <person name="Schleicher M."/>
            <person name="Weinstock G.M."/>
            <person name="Rosenthal A."/>
            <person name="Cox E.C."/>
            <person name="Chisholm R.L."/>
            <person name="Gibbs R.A."/>
            <person name="Loomis W.F."/>
            <person name="Platzer M."/>
            <person name="Kay R.R."/>
            <person name="Williams J.G."/>
            <person name="Dear P.H."/>
            <person name="Noegel A.A."/>
            <person name="Barrell B.G."/>
            <person name="Kuspa A."/>
        </authorList>
    </citation>
    <scope>NUCLEOTIDE SEQUENCE [LARGE SCALE GENOMIC DNA]</scope>
    <source>
        <strain>AX4</strain>
    </source>
</reference>
<accession>Q1ZXR2</accession>
<gene>
    <name type="ORF">DDB_G0267566</name>
</gene>
<feature type="chain" id="PRO_0000362062" description="Probable serine/threonine-protein kinase DDB_G0267566">
    <location>
        <begin position="1"/>
        <end position="844"/>
    </location>
</feature>
<feature type="repeat" description="ANK 1">
    <location>
        <begin position="335"/>
        <end position="367"/>
    </location>
</feature>
<feature type="repeat" description="ANK 2">
    <location>
        <begin position="371"/>
        <end position="400"/>
    </location>
</feature>
<feature type="domain" description="Protein kinase" evidence="1">
    <location>
        <begin position="508"/>
        <end position="773"/>
    </location>
</feature>
<feature type="active site" description="Proton acceptor" evidence="1 2">
    <location>
        <position position="634"/>
    </location>
</feature>
<feature type="binding site" evidence="1">
    <location>
        <begin position="514"/>
        <end position="522"/>
    </location>
    <ligand>
        <name>ATP</name>
        <dbReference type="ChEBI" id="CHEBI:30616"/>
    </ligand>
</feature>
<feature type="binding site" evidence="1">
    <location>
        <position position="539"/>
    </location>
    <ligand>
        <name>ATP</name>
        <dbReference type="ChEBI" id="CHEBI:30616"/>
    </ligand>
</feature>
<evidence type="ECO:0000255" key="1">
    <source>
        <dbReference type="PROSITE-ProRule" id="PRU00159"/>
    </source>
</evidence>
<evidence type="ECO:0000255" key="2">
    <source>
        <dbReference type="PROSITE-ProRule" id="PRU10027"/>
    </source>
</evidence>
<proteinExistence type="inferred from homology"/>
<dbReference type="EC" id="2.7.11.1"/>
<dbReference type="EMBL" id="AAFI02000003">
    <property type="protein sequence ID" value="EAS66945.1"/>
    <property type="molecule type" value="Genomic_DNA"/>
</dbReference>
<dbReference type="RefSeq" id="XP_001134482.1">
    <property type="nucleotide sequence ID" value="XM_001134482.1"/>
</dbReference>
<dbReference type="SMR" id="Q1ZXR2"/>
<dbReference type="STRING" id="44689.Q1ZXR2"/>
<dbReference type="PaxDb" id="44689-DDB0231559"/>
<dbReference type="EnsemblProtists" id="EAS66945">
    <property type="protein sequence ID" value="EAS66945"/>
    <property type="gene ID" value="DDB_G0267566"/>
</dbReference>
<dbReference type="GeneID" id="8615936"/>
<dbReference type="KEGG" id="ddi:DDB_G0267566"/>
<dbReference type="dictyBase" id="DDB_G0267566"/>
<dbReference type="VEuPathDB" id="AmoebaDB:DDB_G0267566"/>
<dbReference type="eggNOG" id="KOG0192">
    <property type="taxonomic scope" value="Eukaryota"/>
</dbReference>
<dbReference type="HOGENOM" id="CLU_337544_0_0_1"/>
<dbReference type="InParanoid" id="Q1ZXR2"/>
<dbReference type="PhylomeDB" id="Q1ZXR2"/>
<dbReference type="Reactome" id="R-DDI-5673000">
    <property type="pathway name" value="RAF activation"/>
</dbReference>
<dbReference type="Reactome" id="R-DDI-5675221">
    <property type="pathway name" value="Negative regulation of MAPK pathway"/>
</dbReference>
<dbReference type="PRO" id="PR:Q1ZXR2"/>
<dbReference type="Proteomes" id="UP000002195">
    <property type="component" value="Chromosome 1"/>
</dbReference>
<dbReference type="GO" id="GO:0005737">
    <property type="term" value="C:cytoplasm"/>
    <property type="evidence" value="ECO:0000318"/>
    <property type="project" value="GO_Central"/>
</dbReference>
<dbReference type="GO" id="GO:0005524">
    <property type="term" value="F:ATP binding"/>
    <property type="evidence" value="ECO:0007669"/>
    <property type="project" value="UniProtKB-KW"/>
</dbReference>
<dbReference type="GO" id="GO:0004672">
    <property type="term" value="F:protein kinase activity"/>
    <property type="evidence" value="ECO:0000318"/>
    <property type="project" value="GO_Central"/>
</dbReference>
<dbReference type="GO" id="GO:0106310">
    <property type="term" value="F:protein serine kinase activity"/>
    <property type="evidence" value="ECO:0007669"/>
    <property type="project" value="RHEA"/>
</dbReference>
<dbReference type="GO" id="GO:0004674">
    <property type="term" value="F:protein serine/threonine kinase activity"/>
    <property type="evidence" value="ECO:0007669"/>
    <property type="project" value="UniProtKB-KW"/>
</dbReference>
<dbReference type="GO" id="GO:0007165">
    <property type="term" value="P:signal transduction"/>
    <property type="evidence" value="ECO:0000318"/>
    <property type="project" value="GO_Central"/>
</dbReference>
<dbReference type="CDD" id="cd00180">
    <property type="entry name" value="PKc"/>
    <property type="match status" value="1"/>
</dbReference>
<dbReference type="Gene3D" id="1.25.40.20">
    <property type="entry name" value="Ankyrin repeat-containing domain"/>
    <property type="match status" value="1"/>
</dbReference>
<dbReference type="Gene3D" id="1.10.510.10">
    <property type="entry name" value="Transferase(Phosphotransferase) domain 1"/>
    <property type="match status" value="1"/>
</dbReference>
<dbReference type="InterPro" id="IPR002110">
    <property type="entry name" value="Ankyrin_rpt"/>
</dbReference>
<dbReference type="InterPro" id="IPR036770">
    <property type="entry name" value="Ankyrin_rpt-contain_sf"/>
</dbReference>
<dbReference type="InterPro" id="IPR011009">
    <property type="entry name" value="Kinase-like_dom_sf"/>
</dbReference>
<dbReference type="InterPro" id="IPR000719">
    <property type="entry name" value="Prot_kinase_dom"/>
</dbReference>
<dbReference type="InterPro" id="IPR017441">
    <property type="entry name" value="Protein_kinase_ATP_BS"/>
</dbReference>
<dbReference type="InterPro" id="IPR008271">
    <property type="entry name" value="Ser/Thr_kinase_AS"/>
</dbReference>
<dbReference type="InterPro" id="IPR051681">
    <property type="entry name" value="Ser/Thr_Kinases-Pseudokinases"/>
</dbReference>
<dbReference type="PANTHER" id="PTHR44329:SF288">
    <property type="entry name" value="MITOGEN-ACTIVATED PROTEIN KINASE KINASE KINASE 20"/>
    <property type="match status" value="1"/>
</dbReference>
<dbReference type="PANTHER" id="PTHR44329">
    <property type="entry name" value="SERINE/THREONINE-PROTEIN KINASE TNNI3K-RELATED"/>
    <property type="match status" value="1"/>
</dbReference>
<dbReference type="Pfam" id="PF12796">
    <property type="entry name" value="Ank_2"/>
    <property type="match status" value="1"/>
</dbReference>
<dbReference type="Pfam" id="PF00069">
    <property type="entry name" value="Pkinase"/>
    <property type="match status" value="1"/>
</dbReference>
<dbReference type="SMART" id="SM00248">
    <property type="entry name" value="ANK"/>
    <property type="match status" value="2"/>
</dbReference>
<dbReference type="SMART" id="SM00220">
    <property type="entry name" value="S_TKc"/>
    <property type="match status" value="1"/>
</dbReference>
<dbReference type="SUPFAM" id="SSF48403">
    <property type="entry name" value="Ankyrin repeat"/>
    <property type="match status" value="1"/>
</dbReference>
<dbReference type="SUPFAM" id="SSF56112">
    <property type="entry name" value="Protein kinase-like (PK-like)"/>
    <property type="match status" value="1"/>
</dbReference>
<dbReference type="PROSITE" id="PS50297">
    <property type="entry name" value="ANK_REP_REGION"/>
    <property type="match status" value="1"/>
</dbReference>
<dbReference type="PROSITE" id="PS50088">
    <property type="entry name" value="ANK_REPEAT"/>
    <property type="match status" value="2"/>
</dbReference>
<dbReference type="PROSITE" id="PS00107">
    <property type="entry name" value="PROTEIN_KINASE_ATP"/>
    <property type="match status" value="1"/>
</dbReference>
<dbReference type="PROSITE" id="PS50011">
    <property type="entry name" value="PROTEIN_KINASE_DOM"/>
    <property type="match status" value="1"/>
</dbReference>
<dbReference type="PROSITE" id="PS00108">
    <property type="entry name" value="PROTEIN_KINASE_ST"/>
    <property type="match status" value="1"/>
</dbReference>
<comment type="catalytic activity">
    <reaction>
        <text>L-seryl-[protein] + ATP = O-phospho-L-seryl-[protein] + ADP + H(+)</text>
        <dbReference type="Rhea" id="RHEA:17989"/>
        <dbReference type="Rhea" id="RHEA-COMP:9863"/>
        <dbReference type="Rhea" id="RHEA-COMP:11604"/>
        <dbReference type="ChEBI" id="CHEBI:15378"/>
        <dbReference type="ChEBI" id="CHEBI:29999"/>
        <dbReference type="ChEBI" id="CHEBI:30616"/>
        <dbReference type="ChEBI" id="CHEBI:83421"/>
        <dbReference type="ChEBI" id="CHEBI:456216"/>
        <dbReference type="EC" id="2.7.11.1"/>
    </reaction>
</comment>
<comment type="catalytic activity">
    <reaction>
        <text>L-threonyl-[protein] + ATP = O-phospho-L-threonyl-[protein] + ADP + H(+)</text>
        <dbReference type="Rhea" id="RHEA:46608"/>
        <dbReference type="Rhea" id="RHEA-COMP:11060"/>
        <dbReference type="Rhea" id="RHEA-COMP:11605"/>
        <dbReference type="ChEBI" id="CHEBI:15378"/>
        <dbReference type="ChEBI" id="CHEBI:30013"/>
        <dbReference type="ChEBI" id="CHEBI:30616"/>
        <dbReference type="ChEBI" id="CHEBI:61977"/>
        <dbReference type="ChEBI" id="CHEBI:456216"/>
        <dbReference type="EC" id="2.7.11.1"/>
    </reaction>
</comment>
<comment type="similarity">
    <text evidence="1">Belongs to the protein kinase superfamily. Ser/Thr protein kinase family.</text>
</comment>
<protein>
    <recommendedName>
        <fullName>Probable serine/threonine-protein kinase DDB_G0267566</fullName>
        <ecNumber>2.7.11.1</ecNumber>
    </recommendedName>
</protein>
<sequence>MNIKFDMFVKDSNSIDSEELLNNYLTLNVVSQELLIQNAQKPLTPLSIEIGKTRTINKNIKSKLNFIMPSFCEYYELEGNYILYFKKLKIFEDFIIYKDQSIPISNQMEIKIGKGKVLVNGKKISIKDEEIKNNFIRDLNFLSSIKNFRNQYSHGNEIEAVESISKKENSINSLVIPTFIKFLGEIIIKTKDTIKFKNLMVLSDNFNILDDVIYQVENNELNLKNSKNSVVYKSIKKSIPIYLLSKVFEHTEFYILEKNNSILNFFCKKRIEDFNENSEDKEFNSTSENDSHESSIDLKCSSEVSQIKIERFHEYVSLFSKCISKNVDINHKNDKGDTALHNTIKNLKKESGPMVAALLSCGANANIRNNKHKVPLHFAIEFGDESIIKILLAFGAKPFLEDSISFSERDPGKIYKELNKSGQVLKILYEIGVITKLFDNFSVLQHVKTFILLEILFQNSMNILKSDIFSSILNNIFNQNIVRFKLIIQNLKEPPLSKFKKIEKFDRSELGKLIGKGANGKVYELHYNFGGVEKHCAVKEIKVDKYRVGAVLKEIESTALSQSPFTVGIYGYFEDEKNNFLYIFLEYCPNGNLFDIINKEKMKSFDEFFSYAFGVVHCTHDIHSNPKGALIHRDIKASNFLVDKNNLVKIGDFGTARFDCTLNLSSLKNGAGTVCFQAPEASRGKATIQSDIYSLGVVLFELCGAIPYKNYNYFFPFGDLKYLRVASAVSNYLRPILHPVIPQPLSDLIYSMLNHNEYDRPTSFEVFQKLKKVQEDYESNKEEWNSIFNTIDMKEDQQFHHERQEKVALMIKKKYLLTRPITESLVNHYDNIVFNIDYSISLNF</sequence>